<gene>
    <name evidence="1" type="primary">kdpA</name>
    <name type="ordered locus">CLH_0915</name>
</gene>
<comment type="function">
    <text evidence="1">Part of the high-affinity ATP-driven potassium transport (or Kdp) system, which catalyzes the hydrolysis of ATP coupled with the electrogenic transport of potassium into the cytoplasm. This subunit binds the extracellular potassium ions and delivers the ions to the membrane domain of KdpB through an intramembrane tunnel.</text>
</comment>
<comment type="subunit">
    <text evidence="1">The system is composed of three essential subunits: KdpA, KdpB and KdpC.</text>
</comment>
<comment type="subcellular location">
    <subcellularLocation>
        <location evidence="1">Cell membrane</location>
        <topology evidence="1">Multi-pass membrane protein</topology>
    </subcellularLocation>
</comment>
<comment type="similarity">
    <text evidence="1">Belongs to the KdpA family.</text>
</comment>
<name>KDPA_CLOBA</name>
<sequence length="579" mass="62076">MMNLVLQYGLYILILVVLAIPLGNYIGKIMNGEKVFLSKILTPCENFIYKMLHIDKDEDMSWKKYSFSVLAFSIISLIVLFLIHIFQGFLPLNPEKVSGTSWDLAFNNAVSFVTNTNWQGYSGESSLSYFTQMMGLTVQNFVSAAVGISVLFALIRGFIRVKQKGIGNFWMDITRTVLYILIPLSIVVSLALVSQGVVQNFKQYETVSLLEPITLEDGTVVTEEVVPLGPAASQIAIKQLGTNGGGFMGTNSAHPIENPTVLSNLFEMISLLLIPVALCFTFGRNIKDRRQGIAIFIAMGIMLVVAMGIIGVNEQMGTPQMALNGQVDLSTINQAGGNMEGKEARFGIATSSTWATFTTAASNGSVNSMHDSYTPIGGMIPMLLMQLGEVVFGGVGCGLYGMIGFAILAVFMAGLMVGRTPEYLGKKIEPFEMKMAVLVCLATPIAILIGSGIASILPETVNSLNNSGAHGFSEVLYAYTSAGGNNGSAFAGFAANTPFINISIGLSMLFARFVPMMGTLAIAGSMVKKKKVAESVGTLPTHNAMFIGLLIFVVLLIGALSFFPALALGPIAEFFQMLG</sequence>
<proteinExistence type="inferred from homology"/>
<evidence type="ECO:0000255" key="1">
    <source>
        <dbReference type="HAMAP-Rule" id="MF_00275"/>
    </source>
</evidence>
<organism>
    <name type="scientific">Clostridium botulinum (strain Alaska E43 / Type E3)</name>
    <dbReference type="NCBI Taxonomy" id="508767"/>
    <lineage>
        <taxon>Bacteria</taxon>
        <taxon>Bacillati</taxon>
        <taxon>Bacillota</taxon>
        <taxon>Clostridia</taxon>
        <taxon>Eubacteriales</taxon>
        <taxon>Clostridiaceae</taxon>
        <taxon>Clostridium</taxon>
    </lineage>
</organism>
<protein>
    <recommendedName>
        <fullName evidence="1">Potassium-transporting ATPase potassium-binding subunit</fullName>
    </recommendedName>
    <alternativeName>
        <fullName evidence="1">ATP phosphohydrolase [potassium-transporting] A chain</fullName>
    </alternativeName>
    <alternativeName>
        <fullName evidence="1">Potassium-binding and translocating subunit A</fullName>
    </alternativeName>
    <alternativeName>
        <fullName evidence="1">Potassium-translocating ATPase A chain</fullName>
    </alternativeName>
</protein>
<dbReference type="EMBL" id="CP001078">
    <property type="protein sequence ID" value="ACD53875.1"/>
    <property type="molecule type" value="Genomic_DNA"/>
</dbReference>
<dbReference type="RefSeq" id="WP_012451692.1">
    <property type="nucleotide sequence ID" value="NC_010723.1"/>
</dbReference>
<dbReference type="SMR" id="B2V2P2"/>
<dbReference type="KEGG" id="cbt:CLH_0915"/>
<dbReference type="HOGENOM" id="CLU_018614_3_0_9"/>
<dbReference type="GO" id="GO:0005886">
    <property type="term" value="C:plasma membrane"/>
    <property type="evidence" value="ECO:0007669"/>
    <property type="project" value="UniProtKB-SubCell"/>
</dbReference>
<dbReference type="GO" id="GO:0008556">
    <property type="term" value="F:P-type potassium transmembrane transporter activity"/>
    <property type="evidence" value="ECO:0007669"/>
    <property type="project" value="InterPro"/>
</dbReference>
<dbReference type="GO" id="GO:0030955">
    <property type="term" value="F:potassium ion binding"/>
    <property type="evidence" value="ECO:0007669"/>
    <property type="project" value="UniProtKB-UniRule"/>
</dbReference>
<dbReference type="HAMAP" id="MF_00275">
    <property type="entry name" value="KdpA"/>
    <property type="match status" value="1"/>
</dbReference>
<dbReference type="InterPro" id="IPR004623">
    <property type="entry name" value="KdpA"/>
</dbReference>
<dbReference type="NCBIfam" id="TIGR00680">
    <property type="entry name" value="kdpA"/>
    <property type="match status" value="1"/>
</dbReference>
<dbReference type="PANTHER" id="PTHR30607">
    <property type="entry name" value="POTASSIUM-TRANSPORTING ATPASE A CHAIN"/>
    <property type="match status" value="1"/>
</dbReference>
<dbReference type="PANTHER" id="PTHR30607:SF2">
    <property type="entry name" value="POTASSIUM-TRANSPORTING ATPASE POTASSIUM-BINDING SUBUNIT"/>
    <property type="match status" value="1"/>
</dbReference>
<dbReference type="Pfam" id="PF03814">
    <property type="entry name" value="KdpA"/>
    <property type="match status" value="1"/>
</dbReference>
<dbReference type="PIRSF" id="PIRSF001294">
    <property type="entry name" value="K_ATPaseA"/>
    <property type="match status" value="1"/>
</dbReference>
<reference key="1">
    <citation type="submission" date="2008-05" db="EMBL/GenBank/DDBJ databases">
        <title>Complete genome sequence of Clostridium botulinum E3 str. Alaska E43.</title>
        <authorList>
            <person name="Brinkac L.M."/>
            <person name="Brown J.L."/>
            <person name="Bruce D."/>
            <person name="Detter C."/>
            <person name="Munk C."/>
            <person name="Smith L.A."/>
            <person name="Smith T.J."/>
            <person name="Sutton G."/>
            <person name="Brettin T.S."/>
        </authorList>
    </citation>
    <scope>NUCLEOTIDE SEQUENCE [LARGE SCALE GENOMIC DNA]</scope>
    <source>
        <strain>Alaska E43 / Type E3</strain>
    </source>
</reference>
<accession>B2V2P2</accession>
<keyword id="KW-1003">Cell membrane</keyword>
<keyword id="KW-0406">Ion transport</keyword>
<keyword id="KW-0472">Membrane</keyword>
<keyword id="KW-0630">Potassium</keyword>
<keyword id="KW-0633">Potassium transport</keyword>
<keyword id="KW-0812">Transmembrane</keyword>
<keyword id="KW-1133">Transmembrane helix</keyword>
<keyword id="KW-0813">Transport</keyword>
<feature type="chain" id="PRO_1000114675" description="Potassium-transporting ATPase potassium-binding subunit">
    <location>
        <begin position="1"/>
        <end position="579"/>
    </location>
</feature>
<feature type="transmembrane region" description="Helical" evidence="1">
    <location>
        <begin position="2"/>
        <end position="22"/>
    </location>
</feature>
<feature type="transmembrane region" description="Helical" evidence="1">
    <location>
        <begin position="66"/>
        <end position="86"/>
    </location>
</feature>
<feature type="transmembrane region" description="Helical" evidence="1">
    <location>
        <begin position="135"/>
        <end position="155"/>
    </location>
</feature>
<feature type="transmembrane region" description="Helical" evidence="1">
    <location>
        <begin position="177"/>
        <end position="197"/>
    </location>
</feature>
<feature type="transmembrane region" description="Helical" evidence="1">
    <location>
        <begin position="262"/>
        <end position="282"/>
    </location>
</feature>
<feature type="transmembrane region" description="Helical" evidence="1">
    <location>
        <begin position="292"/>
        <end position="312"/>
    </location>
</feature>
<feature type="transmembrane region" description="Helical" evidence="1">
    <location>
        <begin position="391"/>
        <end position="411"/>
    </location>
</feature>
<feature type="transmembrane region" description="Helical" evidence="1">
    <location>
        <begin position="437"/>
        <end position="457"/>
    </location>
</feature>
<feature type="transmembrane region" description="Helical" evidence="1">
    <location>
        <begin position="490"/>
        <end position="510"/>
    </location>
</feature>
<feature type="transmembrane region" description="Helical" evidence="1">
    <location>
        <begin position="546"/>
        <end position="566"/>
    </location>
</feature>